<evidence type="ECO:0000255" key="1">
    <source>
        <dbReference type="HAMAP-Rule" id="MF_01681"/>
    </source>
</evidence>
<reference key="1">
    <citation type="journal article" date="2007" name="PLoS Genet.">
        <title>The complete genome sequence of Yersinia pseudotuberculosis IP31758, the causative agent of Far East scarlet-like fever.</title>
        <authorList>
            <person name="Eppinger M."/>
            <person name="Rosovitz M.J."/>
            <person name="Fricke W.F."/>
            <person name="Rasko D.A."/>
            <person name="Kokorina G."/>
            <person name="Fayolle C."/>
            <person name="Lindler L.E."/>
            <person name="Carniel E."/>
            <person name="Ravel J."/>
        </authorList>
    </citation>
    <scope>NUCLEOTIDE SEQUENCE [LARGE SCALE GENOMIC DNA]</scope>
    <source>
        <strain>IP 31758</strain>
    </source>
</reference>
<comment type="function">
    <text evidence="1">Bifunctional enzyme that catalyzes the enolization of 2,3-diketo-5-methylthiopentyl-1-phosphate (DK-MTP-1-P) into the intermediate 2-hydroxy-3-keto-5-methylthiopentenyl-1-phosphate (HK-MTPenyl-1-P), which is then dephosphorylated to form the acireductone 1,2-dihydroxy-3-keto-5-methylthiopentene (DHK-MTPene).</text>
</comment>
<comment type="catalytic activity">
    <reaction evidence="1">
        <text>5-methylsulfanyl-2,3-dioxopentyl phosphate + H2O = 1,2-dihydroxy-5-(methylsulfanyl)pent-1-en-3-one + phosphate</text>
        <dbReference type="Rhea" id="RHEA:21700"/>
        <dbReference type="ChEBI" id="CHEBI:15377"/>
        <dbReference type="ChEBI" id="CHEBI:43474"/>
        <dbReference type="ChEBI" id="CHEBI:49252"/>
        <dbReference type="ChEBI" id="CHEBI:58828"/>
        <dbReference type="EC" id="3.1.3.77"/>
    </reaction>
</comment>
<comment type="cofactor">
    <cofactor evidence="1">
        <name>Mg(2+)</name>
        <dbReference type="ChEBI" id="CHEBI:18420"/>
    </cofactor>
    <text evidence="1">Binds 1 Mg(2+) ion per subunit.</text>
</comment>
<comment type="pathway">
    <text evidence="1">Amino-acid biosynthesis; L-methionine biosynthesis via salvage pathway; L-methionine from S-methyl-5-thio-alpha-D-ribose 1-phosphate: step 3/6.</text>
</comment>
<comment type="pathway">
    <text evidence="1">Amino-acid biosynthesis; L-methionine biosynthesis via salvage pathway; L-methionine from S-methyl-5-thio-alpha-D-ribose 1-phosphate: step 4/6.</text>
</comment>
<comment type="subunit">
    <text evidence="1">Monomer.</text>
</comment>
<comment type="similarity">
    <text evidence="1">Belongs to the HAD-like hydrolase superfamily. MasA/MtnC family.</text>
</comment>
<dbReference type="EC" id="3.1.3.77" evidence="1"/>
<dbReference type="EMBL" id="CP000720">
    <property type="protein sequence ID" value="ABS47960.1"/>
    <property type="molecule type" value="Genomic_DNA"/>
</dbReference>
<dbReference type="RefSeq" id="WP_012105602.1">
    <property type="nucleotide sequence ID" value="NC_009708.1"/>
</dbReference>
<dbReference type="SMR" id="A7FLL3"/>
<dbReference type="KEGG" id="ypi:YpsIP31758_3181"/>
<dbReference type="HOGENOM" id="CLU_023273_0_0_6"/>
<dbReference type="UniPathway" id="UPA00904">
    <property type="reaction ID" value="UER00876"/>
</dbReference>
<dbReference type="UniPathway" id="UPA00904">
    <property type="reaction ID" value="UER00877"/>
</dbReference>
<dbReference type="Proteomes" id="UP000002412">
    <property type="component" value="Chromosome"/>
</dbReference>
<dbReference type="GO" id="GO:0043715">
    <property type="term" value="F:2,3-diketo-5-methylthiopentyl-1-phosphate enolase activity"/>
    <property type="evidence" value="ECO:0007669"/>
    <property type="project" value="UniProtKB-UniRule"/>
</dbReference>
<dbReference type="GO" id="GO:0043716">
    <property type="term" value="F:2-hydroxy-3-keto-5-methylthiopentenyl-1-phosphate phosphatase activity"/>
    <property type="evidence" value="ECO:0007669"/>
    <property type="project" value="UniProtKB-UniRule"/>
</dbReference>
<dbReference type="GO" id="GO:0043874">
    <property type="term" value="F:acireductone synthase activity"/>
    <property type="evidence" value="ECO:0007669"/>
    <property type="project" value="UniProtKB-EC"/>
</dbReference>
<dbReference type="GO" id="GO:0000287">
    <property type="term" value="F:magnesium ion binding"/>
    <property type="evidence" value="ECO:0007669"/>
    <property type="project" value="UniProtKB-UniRule"/>
</dbReference>
<dbReference type="GO" id="GO:0019509">
    <property type="term" value="P:L-methionine salvage from methylthioadenosine"/>
    <property type="evidence" value="ECO:0007669"/>
    <property type="project" value="UniProtKB-UniRule"/>
</dbReference>
<dbReference type="CDD" id="cd01629">
    <property type="entry name" value="HAD_EP"/>
    <property type="match status" value="1"/>
</dbReference>
<dbReference type="Gene3D" id="1.10.720.60">
    <property type="match status" value="1"/>
</dbReference>
<dbReference type="Gene3D" id="3.40.50.1000">
    <property type="entry name" value="HAD superfamily/HAD-like"/>
    <property type="match status" value="1"/>
</dbReference>
<dbReference type="HAMAP" id="MF_01681">
    <property type="entry name" value="Salvage_MtnC"/>
    <property type="match status" value="1"/>
</dbReference>
<dbReference type="InterPro" id="IPR023943">
    <property type="entry name" value="Enolase-ppase_E1"/>
</dbReference>
<dbReference type="InterPro" id="IPR036412">
    <property type="entry name" value="HAD-like_sf"/>
</dbReference>
<dbReference type="InterPro" id="IPR006439">
    <property type="entry name" value="HAD-SF_hydro_IA"/>
</dbReference>
<dbReference type="InterPro" id="IPR023214">
    <property type="entry name" value="HAD_sf"/>
</dbReference>
<dbReference type="NCBIfam" id="TIGR01691">
    <property type="entry name" value="enolase-ppase"/>
    <property type="match status" value="1"/>
</dbReference>
<dbReference type="NCBIfam" id="TIGR01549">
    <property type="entry name" value="HAD-SF-IA-v1"/>
    <property type="match status" value="1"/>
</dbReference>
<dbReference type="PANTHER" id="PTHR20371">
    <property type="entry name" value="ENOLASE-PHOSPHATASE E1"/>
    <property type="match status" value="1"/>
</dbReference>
<dbReference type="PANTHER" id="PTHR20371:SF1">
    <property type="entry name" value="ENOLASE-PHOSPHATASE E1"/>
    <property type="match status" value="1"/>
</dbReference>
<dbReference type="Pfam" id="PF00702">
    <property type="entry name" value="Hydrolase"/>
    <property type="match status" value="1"/>
</dbReference>
<dbReference type="PRINTS" id="PR00413">
    <property type="entry name" value="HADHALOGNASE"/>
</dbReference>
<dbReference type="SFLD" id="SFLDG01133">
    <property type="entry name" value="C1.5.4:_Enolase-phosphatase_Li"/>
    <property type="match status" value="1"/>
</dbReference>
<dbReference type="SFLD" id="SFLDF00044">
    <property type="entry name" value="enolase-phosphatase"/>
    <property type="match status" value="1"/>
</dbReference>
<dbReference type="SUPFAM" id="SSF56784">
    <property type="entry name" value="HAD-like"/>
    <property type="match status" value="1"/>
</dbReference>
<protein>
    <recommendedName>
        <fullName evidence="1">Enolase-phosphatase E1</fullName>
        <ecNumber evidence="1">3.1.3.77</ecNumber>
    </recommendedName>
    <alternativeName>
        <fullName evidence="1">2,3-diketo-5-methylthio-1-phosphopentane phosphatase</fullName>
    </alternativeName>
</protein>
<sequence>MIQVIVTDIEGTTTDIRFVHQVLFPYARERLTPFLRAHQQDDDIAALLVDLRREIAQPDADIETLITVLHGFMDEDRKSTVLKAIQGIIWRTGYLQADFRGHVYPEVAQQLADWHQQGLKLYVYSSGSVAAQKLLFGYSDAGDLCPLFSGYFDTHVGAKRDVSAYQKIANQLGIAPQALLFLSDIRQELDAAQLAGWHTCQLIRDLPDNDSAHPQVNRFDQIVLSLFTE</sequence>
<feature type="chain" id="PRO_0000357444" description="Enolase-phosphatase E1">
    <location>
        <begin position="1"/>
        <end position="229"/>
    </location>
</feature>
<name>MTNC_YERP3</name>
<accession>A7FLL3</accession>
<proteinExistence type="inferred from homology"/>
<organism>
    <name type="scientific">Yersinia pseudotuberculosis serotype O:1b (strain IP 31758)</name>
    <dbReference type="NCBI Taxonomy" id="349747"/>
    <lineage>
        <taxon>Bacteria</taxon>
        <taxon>Pseudomonadati</taxon>
        <taxon>Pseudomonadota</taxon>
        <taxon>Gammaproteobacteria</taxon>
        <taxon>Enterobacterales</taxon>
        <taxon>Yersiniaceae</taxon>
        <taxon>Yersinia</taxon>
    </lineage>
</organism>
<gene>
    <name evidence="1" type="primary">mtnC</name>
    <name type="ordered locus">YpsIP31758_3181</name>
</gene>
<keyword id="KW-0028">Amino-acid biosynthesis</keyword>
<keyword id="KW-0378">Hydrolase</keyword>
<keyword id="KW-0460">Magnesium</keyword>
<keyword id="KW-0479">Metal-binding</keyword>
<keyword id="KW-0486">Methionine biosynthesis</keyword>